<dbReference type="EMBL" id="AE017197">
    <property type="protein sequence ID" value="AAU04119.1"/>
    <property type="molecule type" value="Genomic_DNA"/>
</dbReference>
<dbReference type="RefSeq" id="WP_011191096.1">
    <property type="nucleotide sequence ID" value="NC_006142.1"/>
</dbReference>
<dbReference type="SMR" id="Q68W73"/>
<dbReference type="KEGG" id="rty:RT0658"/>
<dbReference type="eggNOG" id="COG0206">
    <property type="taxonomic scope" value="Bacteria"/>
</dbReference>
<dbReference type="HOGENOM" id="CLU_024865_0_4_5"/>
<dbReference type="OrthoDB" id="9813375at2"/>
<dbReference type="Proteomes" id="UP000000604">
    <property type="component" value="Chromosome"/>
</dbReference>
<dbReference type="GO" id="GO:0032153">
    <property type="term" value="C:cell division site"/>
    <property type="evidence" value="ECO:0007669"/>
    <property type="project" value="UniProtKB-UniRule"/>
</dbReference>
<dbReference type="GO" id="GO:0005737">
    <property type="term" value="C:cytoplasm"/>
    <property type="evidence" value="ECO:0007669"/>
    <property type="project" value="UniProtKB-SubCell"/>
</dbReference>
<dbReference type="GO" id="GO:0005525">
    <property type="term" value="F:GTP binding"/>
    <property type="evidence" value="ECO:0007669"/>
    <property type="project" value="UniProtKB-UniRule"/>
</dbReference>
<dbReference type="GO" id="GO:0003924">
    <property type="term" value="F:GTPase activity"/>
    <property type="evidence" value="ECO:0007669"/>
    <property type="project" value="UniProtKB-UniRule"/>
</dbReference>
<dbReference type="GO" id="GO:0000917">
    <property type="term" value="P:division septum assembly"/>
    <property type="evidence" value="ECO:0007669"/>
    <property type="project" value="UniProtKB-KW"/>
</dbReference>
<dbReference type="GO" id="GO:0043093">
    <property type="term" value="P:FtsZ-dependent cytokinesis"/>
    <property type="evidence" value="ECO:0007669"/>
    <property type="project" value="UniProtKB-UniRule"/>
</dbReference>
<dbReference type="GO" id="GO:0051258">
    <property type="term" value="P:protein polymerization"/>
    <property type="evidence" value="ECO:0007669"/>
    <property type="project" value="UniProtKB-UniRule"/>
</dbReference>
<dbReference type="CDD" id="cd02201">
    <property type="entry name" value="FtsZ_type1"/>
    <property type="match status" value="1"/>
</dbReference>
<dbReference type="FunFam" id="3.30.1330.20:FF:000011">
    <property type="entry name" value="Cell division protein FtsZ"/>
    <property type="match status" value="1"/>
</dbReference>
<dbReference type="FunFam" id="3.40.50.1440:FF:000001">
    <property type="entry name" value="Cell division protein FtsZ"/>
    <property type="match status" value="1"/>
</dbReference>
<dbReference type="Gene3D" id="3.30.1330.20">
    <property type="entry name" value="Tubulin/FtsZ, C-terminal domain"/>
    <property type="match status" value="1"/>
</dbReference>
<dbReference type="Gene3D" id="3.40.50.1440">
    <property type="entry name" value="Tubulin/FtsZ, GTPase domain"/>
    <property type="match status" value="1"/>
</dbReference>
<dbReference type="HAMAP" id="MF_00909">
    <property type="entry name" value="FtsZ"/>
    <property type="match status" value="1"/>
</dbReference>
<dbReference type="InterPro" id="IPR000158">
    <property type="entry name" value="Cell_div_FtsZ"/>
</dbReference>
<dbReference type="InterPro" id="IPR020805">
    <property type="entry name" value="Cell_div_FtsZ_CS"/>
</dbReference>
<dbReference type="InterPro" id="IPR045061">
    <property type="entry name" value="FtsZ/CetZ"/>
</dbReference>
<dbReference type="InterPro" id="IPR024757">
    <property type="entry name" value="FtsZ_C"/>
</dbReference>
<dbReference type="InterPro" id="IPR008280">
    <property type="entry name" value="Tub_FtsZ_C"/>
</dbReference>
<dbReference type="InterPro" id="IPR037103">
    <property type="entry name" value="Tubulin/FtsZ-like_C"/>
</dbReference>
<dbReference type="InterPro" id="IPR018316">
    <property type="entry name" value="Tubulin/FtsZ_2-layer-sand-dom"/>
</dbReference>
<dbReference type="InterPro" id="IPR036525">
    <property type="entry name" value="Tubulin/FtsZ_GTPase_sf"/>
</dbReference>
<dbReference type="InterPro" id="IPR003008">
    <property type="entry name" value="Tubulin_FtsZ_GTPase"/>
</dbReference>
<dbReference type="NCBIfam" id="TIGR00065">
    <property type="entry name" value="ftsZ"/>
    <property type="match status" value="1"/>
</dbReference>
<dbReference type="PANTHER" id="PTHR30314">
    <property type="entry name" value="CELL DIVISION PROTEIN FTSZ-RELATED"/>
    <property type="match status" value="1"/>
</dbReference>
<dbReference type="PANTHER" id="PTHR30314:SF3">
    <property type="entry name" value="MITOCHONDRIAL DIVISION PROTEIN FSZA"/>
    <property type="match status" value="1"/>
</dbReference>
<dbReference type="Pfam" id="PF12327">
    <property type="entry name" value="FtsZ_C"/>
    <property type="match status" value="1"/>
</dbReference>
<dbReference type="Pfam" id="PF00091">
    <property type="entry name" value="Tubulin"/>
    <property type="match status" value="1"/>
</dbReference>
<dbReference type="PRINTS" id="PR00423">
    <property type="entry name" value="CELLDVISFTSZ"/>
</dbReference>
<dbReference type="SMART" id="SM00864">
    <property type="entry name" value="Tubulin"/>
    <property type="match status" value="1"/>
</dbReference>
<dbReference type="SMART" id="SM00865">
    <property type="entry name" value="Tubulin_C"/>
    <property type="match status" value="1"/>
</dbReference>
<dbReference type="SUPFAM" id="SSF55307">
    <property type="entry name" value="Tubulin C-terminal domain-like"/>
    <property type="match status" value="1"/>
</dbReference>
<dbReference type="SUPFAM" id="SSF52490">
    <property type="entry name" value="Tubulin nucleotide-binding domain-like"/>
    <property type="match status" value="1"/>
</dbReference>
<dbReference type="PROSITE" id="PS01134">
    <property type="entry name" value="FTSZ_1"/>
    <property type="match status" value="1"/>
</dbReference>
<dbReference type="PROSITE" id="PS01135">
    <property type="entry name" value="FTSZ_2"/>
    <property type="match status" value="1"/>
</dbReference>
<organism>
    <name type="scientific">Rickettsia typhi (strain ATCC VR-144 / Wilmington)</name>
    <dbReference type="NCBI Taxonomy" id="257363"/>
    <lineage>
        <taxon>Bacteria</taxon>
        <taxon>Pseudomonadati</taxon>
        <taxon>Pseudomonadota</taxon>
        <taxon>Alphaproteobacteria</taxon>
        <taxon>Rickettsiales</taxon>
        <taxon>Rickettsiaceae</taxon>
        <taxon>Rickettsieae</taxon>
        <taxon>Rickettsia</taxon>
        <taxon>typhus group</taxon>
    </lineage>
</organism>
<comment type="function">
    <text evidence="1">Essential cell division protein that forms a contractile ring structure (Z ring) at the future cell division site. The regulation of the ring assembly controls the timing and the location of cell division. One of the functions of the FtsZ ring is to recruit other cell division proteins to the septum to produce a new cell wall between the dividing cells. Binds GTP and shows GTPase activity.</text>
</comment>
<comment type="subunit">
    <text evidence="1">Homodimer. Polymerizes to form a dynamic ring structure in a strictly GTP-dependent manner. Interacts directly with several other division proteins.</text>
</comment>
<comment type="subcellular location">
    <subcellularLocation>
        <location evidence="1">Cytoplasm</location>
    </subcellularLocation>
    <text evidence="1">Assembles at midcell at the inner surface of the cytoplasmic membrane.</text>
</comment>
<comment type="similarity">
    <text evidence="1">Belongs to the FtsZ family.</text>
</comment>
<reference key="1">
    <citation type="journal article" date="2004" name="J. Bacteriol.">
        <title>Complete genome sequence of Rickettsia typhi and comparison with sequences of other Rickettsiae.</title>
        <authorList>
            <person name="McLeod M.P."/>
            <person name="Qin X."/>
            <person name="Karpathy S.E."/>
            <person name="Gioia J."/>
            <person name="Highlander S.K."/>
            <person name="Fox G.E."/>
            <person name="McNeill T.Z."/>
            <person name="Jiang H."/>
            <person name="Muzny D."/>
            <person name="Jacob L.S."/>
            <person name="Hawes A.C."/>
            <person name="Sodergren E."/>
            <person name="Gill R."/>
            <person name="Hume J."/>
            <person name="Morgan M."/>
            <person name="Fan G."/>
            <person name="Amin A.G."/>
            <person name="Gibbs R.A."/>
            <person name="Hong C."/>
            <person name="Yu X.-J."/>
            <person name="Walker D.H."/>
            <person name="Weinstock G.M."/>
        </authorList>
    </citation>
    <scope>NUCLEOTIDE SEQUENCE [LARGE SCALE GENOMIC DNA]</scope>
    <source>
        <strain>ATCC VR-144 / Wilmington</strain>
    </source>
</reference>
<accession>Q68W73</accession>
<name>FTSZ_RICTY</name>
<evidence type="ECO:0000255" key="1">
    <source>
        <dbReference type="HAMAP-Rule" id="MF_00909"/>
    </source>
</evidence>
<proteinExistence type="inferred from homology"/>
<sequence length="452" mass="48948">MILNIKAPENIVLKPTITVFGVGGAGSNAVNNMIHANLQGANFVVANTDAQSLEHSLCINKIQLGVSTTRGLGAGASPEVGALAAQESENEIRSSLENSNMVFITAGMGGGTGTGSAPIIARIAKELGILTVGVVTKPFHFEGGHRMKTADKGLIELQQFVDTLIVIPNQNLFRIANEQTTFADAFKMADDVLHAGVRGVTDLMIMPGLINLDFADIKAVMSEMGKAMMGTGEDSGEDRAIKAAESAISNPLLDHSSMCGARGVLINITGGPDMTLFEVDNAANRIREEVDNIDANIIFGSTFNPELKGIIRVSVVATGIDADKVPKYKLAIDENTNTVPKETYNESMIQHTQIEEIPAFNNYSTENIEITDSSIKQNYTENEQELRLHVNAVNKPENNSQKSSFLWKIWGSLRASNNQTLERKNVIVNTLDQDNKESDIHDIPAFLRKKRD</sequence>
<feature type="chain" id="PRO_0000280975" description="Cell division protein FtsZ">
    <location>
        <begin position="1"/>
        <end position="452"/>
    </location>
</feature>
<feature type="binding site" evidence="1">
    <location>
        <begin position="24"/>
        <end position="28"/>
    </location>
    <ligand>
        <name>GTP</name>
        <dbReference type="ChEBI" id="CHEBI:37565"/>
    </ligand>
</feature>
<feature type="binding site" evidence="1">
    <location>
        <begin position="111"/>
        <end position="113"/>
    </location>
    <ligand>
        <name>GTP</name>
        <dbReference type="ChEBI" id="CHEBI:37565"/>
    </ligand>
</feature>
<feature type="binding site" evidence="1">
    <location>
        <position position="142"/>
    </location>
    <ligand>
        <name>GTP</name>
        <dbReference type="ChEBI" id="CHEBI:37565"/>
    </ligand>
</feature>
<feature type="binding site" evidence="1">
    <location>
        <position position="146"/>
    </location>
    <ligand>
        <name>GTP</name>
        <dbReference type="ChEBI" id="CHEBI:37565"/>
    </ligand>
</feature>
<feature type="binding site" evidence="1">
    <location>
        <position position="190"/>
    </location>
    <ligand>
        <name>GTP</name>
        <dbReference type="ChEBI" id="CHEBI:37565"/>
    </ligand>
</feature>
<keyword id="KW-0131">Cell cycle</keyword>
<keyword id="KW-0132">Cell division</keyword>
<keyword id="KW-0963">Cytoplasm</keyword>
<keyword id="KW-0342">GTP-binding</keyword>
<keyword id="KW-0547">Nucleotide-binding</keyword>
<keyword id="KW-0717">Septation</keyword>
<protein>
    <recommendedName>
        <fullName evidence="1">Cell division protein FtsZ</fullName>
    </recommendedName>
</protein>
<gene>
    <name evidence="1" type="primary">ftsZ</name>
    <name type="ordered locus">RT0658</name>
</gene>